<keyword id="KW-0472">Membrane</keyword>
<keyword id="KW-1185">Reference proteome</keyword>
<keyword id="KW-0812">Transmembrane</keyword>
<keyword id="KW-1133">Transmembrane helix</keyword>
<gene>
    <name type="primary">sra-3</name>
    <name type="ORF">AH6.7</name>
</gene>
<feature type="chain" id="PRO_0000104470" description="Serpentine receptor class alpha-3">
    <location>
        <begin position="1"/>
        <end position="329"/>
    </location>
</feature>
<feature type="transmembrane region" description="Helical" evidence="1">
    <location>
        <begin position="25"/>
        <end position="45"/>
    </location>
</feature>
<feature type="transmembrane region" description="Helical" evidence="1">
    <location>
        <begin position="57"/>
        <end position="77"/>
    </location>
</feature>
<feature type="transmembrane region" description="Helical" evidence="1">
    <location>
        <begin position="104"/>
        <end position="124"/>
    </location>
</feature>
<feature type="transmembrane region" description="Helical" evidence="1">
    <location>
        <begin position="144"/>
        <end position="164"/>
    </location>
</feature>
<feature type="transmembrane region" description="Helical" evidence="1">
    <location>
        <begin position="187"/>
        <end position="207"/>
    </location>
</feature>
<feature type="transmembrane region" description="Helical" evidence="1">
    <location>
        <begin position="238"/>
        <end position="258"/>
    </location>
</feature>
<feature type="transmembrane region" description="Helical" evidence="1">
    <location>
        <begin position="273"/>
        <end position="293"/>
    </location>
</feature>
<comment type="subcellular location">
    <subcellularLocation>
        <location evidence="2">Membrane</location>
        <topology evidence="2">Multi-pass membrane protein</topology>
    </subcellularLocation>
</comment>
<comment type="similarity">
    <text evidence="2">Belongs to the nematode receptor-like protein sra family.</text>
</comment>
<organism>
    <name type="scientific">Caenorhabditis elegans</name>
    <dbReference type="NCBI Taxonomy" id="6239"/>
    <lineage>
        <taxon>Eukaryota</taxon>
        <taxon>Metazoa</taxon>
        <taxon>Ecdysozoa</taxon>
        <taxon>Nematoda</taxon>
        <taxon>Chromadorea</taxon>
        <taxon>Rhabditida</taxon>
        <taxon>Rhabditina</taxon>
        <taxon>Rhabditomorpha</taxon>
        <taxon>Rhabditoidea</taxon>
        <taxon>Rhabditidae</taxon>
        <taxon>Peloderinae</taxon>
        <taxon>Caenorhabditis</taxon>
    </lineage>
</organism>
<sequence>MSSQKCASHLEIARLESLNFKISQLIYFVLIITTLFFTFFALKVIQKKCIFQLSTKILLYQNLFSANIHQIFLGITIVERLNIAFFKLNDKCIPLRPETNCQLYLEMFIAGLSGMVYGQTGLLFERACATFIKKYEKRKSLATGIITSIIVLLLSGSTARIIIWDDPLSEYQLACTSWPSKSRDRSTMFFSICTFISLFNLVISLLIRRHNEKLEYSTPFVVGPRFRKREVIDSTSTICFLTFFQFIFMFIYSFGVFLLGTIREIIGYEQYYFWVVWVYTIPFIAASFPILLIYRIRYSNTNRIMIIKQFTSTKQTQEDHIKQMKNVWN</sequence>
<proteinExistence type="inferred from homology"/>
<accession>Q09205</accession>
<evidence type="ECO:0000255" key="1"/>
<evidence type="ECO:0000305" key="2"/>
<reference key="1">
    <citation type="journal article" date="1998" name="Science">
        <title>Genome sequence of the nematode C. elegans: a platform for investigating biology.</title>
        <authorList>
            <consortium name="The C. elegans sequencing consortium"/>
        </authorList>
    </citation>
    <scope>NUCLEOTIDE SEQUENCE [LARGE SCALE GENOMIC DNA]</scope>
    <source>
        <strain>Bristol N2</strain>
    </source>
</reference>
<name>SRA3_CAEEL</name>
<dbReference type="EMBL" id="Z48009">
    <property type="protein sequence ID" value="CAA88086.1"/>
    <property type="molecule type" value="Genomic_DNA"/>
</dbReference>
<dbReference type="PIR" id="T18622">
    <property type="entry name" value="T18622"/>
</dbReference>
<dbReference type="RefSeq" id="NP_496048.1">
    <property type="nucleotide sequence ID" value="NM_063647.4"/>
</dbReference>
<dbReference type="SMR" id="Q09205"/>
<dbReference type="BioGRID" id="56267">
    <property type="interactions" value="1"/>
</dbReference>
<dbReference type="FunCoup" id="Q09205">
    <property type="interactions" value="2"/>
</dbReference>
<dbReference type="IntAct" id="Q09205">
    <property type="interactions" value="1"/>
</dbReference>
<dbReference type="MINT" id="Q09205"/>
<dbReference type="STRING" id="6239.AH6.7.1"/>
<dbReference type="PaxDb" id="6239-AH6.7"/>
<dbReference type="EnsemblMetazoa" id="AH6.7.1">
    <property type="protein sequence ID" value="AH6.7.1"/>
    <property type="gene ID" value="WBGene00005029"/>
</dbReference>
<dbReference type="GeneID" id="191774"/>
<dbReference type="KEGG" id="cel:CELE_AH6.7"/>
<dbReference type="UCSC" id="AH6.7">
    <property type="organism name" value="c. elegans"/>
</dbReference>
<dbReference type="AGR" id="WB:WBGene00005029"/>
<dbReference type="CTD" id="191774"/>
<dbReference type="WormBase" id="AH6.7">
    <property type="protein sequence ID" value="CE01461"/>
    <property type="gene ID" value="WBGene00005029"/>
    <property type="gene designation" value="sra-3"/>
</dbReference>
<dbReference type="eggNOG" id="ENOG502TJHT">
    <property type="taxonomic scope" value="Eukaryota"/>
</dbReference>
<dbReference type="GeneTree" id="ENSGT00970000195848"/>
<dbReference type="HOGENOM" id="CLU_048025_0_1_1"/>
<dbReference type="InParanoid" id="Q09205"/>
<dbReference type="OMA" id="NTNRIMI"/>
<dbReference type="OrthoDB" id="5801916at2759"/>
<dbReference type="PhylomeDB" id="Q09205"/>
<dbReference type="PRO" id="PR:Q09205"/>
<dbReference type="Proteomes" id="UP000001940">
    <property type="component" value="Chromosome II"/>
</dbReference>
<dbReference type="GO" id="GO:0016020">
    <property type="term" value="C:membrane"/>
    <property type="evidence" value="ECO:0007669"/>
    <property type="project" value="UniProtKB-SubCell"/>
</dbReference>
<dbReference type="GO" id="GO:0004930">
    <property type="term" value="F:G protein-coupled receptor activity"/>
    <property type="evidence" value="ECO:0007669"/>
    <property type="project" value="InterPro"/>
</dbReference>
<dbReference type="GO" id="GO:0004984">
    <property type="term" value="F:olfactory receptor activity"/>
    <property type="evidence" value="ECO:0000318"/>
    <property type="project" value="GO_Central"/>
</dbReference>
<dbReference type="GO" id="GO:0050907">
    <property type="term" value="P:detection of chemical stimulus involved in sensory perception"/>
    <property type="evidence" value="ECO:0000318"/>
    <property type="project" value="GO_Central"/>
</dbReference>
<dbReference type="InterPro" id="IPR000344">
    <property type="entry name" value="7TM_GPCR_serpentine_rcpt_Sra"/>
</dbReference>
<dbReference type="InterPro" id="IPR051080">
    <property type="entry name" value="Nematode_rcpt-like_serp_alpha"/>
</dbReference>
<dbReference type="PANTHER" id="PTHR31357:SF5">
    <property type="entry name" value="SERPENTINE RECEPTOR CLASS ALPHA-1-RELATED"/>
    <property type="match status" value="1"/>
</dbReference>
<dbReference type="PANTHER" id="PTHR31357">
    <property type="entry name" value="SERPENTINE RECEPTOR CLASS ALPHA-10"/>
    <property type="match status" value="1"/>
</dbReference>
<dbReference type="Pfam" id="PF02117">
    <property type="entry name" value="7TM_GPCR_Sra"/>
    <property type="match status" value="1"/>
</dbReference>
<dbReference type="PRINTS" id="PR00697">
    <property type="entry name" value="TMPROTEINSRA"/>
</dbReference>
<protein>
    <recommendedName>
        <fullName>Serpentine receptor class alpha-3</fullName>
        <shortName>Protein sra-3</shortName>
    </recommendedName>
</protein>